<evidence type="ECO:0000250" key="1">
    <source>
        <dbReference type="UniProtKB" id="P00426"/>
    </source>
</evidence>
<evidence type="ECO:0000250" key="2">
    <source>
        <dbReference type="UniProtKB" id="P00427"/>
    </source>
</evidence>
<evidence type="ECO:0000305" key="3"/>
<organism>
    <name type="scientific">Thunnus obesus</name>
    <name type="common">Bigeye tuna</name>
    <dbReference type="NCBI Taxonomy" id="8241"/>
    <lineage>
        <taxon>Eukaryota</taxon>
        <taxon>Metazoa</taxon>
        <taxon>Chordata</taxon>
        <taxon>Craniata</taxon>
        <taxon>Vertebrata</taxon>
        <taxon>Euteleostomi</taxon>
        <taxon>Actinopterygii</taxon>
        <taxon>Neopterygii</taxon>
        <taxon>Teleostei</taxon>
        <taxon>Neoteleostei</taxon>
        <taxon>Acanthomorphata</taxon>
        <taxon>Pelagiaria</taxon>
        <taxon>Scombriformes</taxon>
        <taxon>Scombridae</taxon>
        <taxon>Thunnus</taxon>
    </lineage>
</organism>
<dbReference type="PIR" id="S77982">
    <property type="entry name" value="S77982"/>
</dbReference>
<dbReference type="UniPathway" id="UPA00705"/>
<dbReference type="GO" id="GO:0005743">
    <property type="term" value="C:mitochondrial inner membrane"/>
    <property type="evidence" value="ECO:0007669"/>
    <property type="project" value="UniProtKB-SubCell"/>
</dbReference>
<dbReference type="GO" id="GO:0045277">
    <property type="term" value="C:respiratory chain complex IV"/>
    <property type="evidence" value="ECO:0007669"/>
    <property type="project" value="InterPro"/>
</dbReference>
<dbReference type="GO" id="GO:0046872">
    <property type="term" value="F:metal ion binding"/>
    <property type="evidence" value="ECO:0007669"/>
    <property type="project" value="UniProtKB-KW"/>
</dbReference>
<dbReference type="GO" id="GO:0006123">
    <property type="term" value="P:mitochondrial electron transport, cytochrome c to oxygen"/>
    <property type="evidence" value="ECO:0007669"/>
    <property type="project" value="InterPro"/>
</dbReference>
<dbReference type="Gene3D" id="1.25.40.40">
    <property type="entry name" value="Cytochrome c oxidase, subunit Va/VI"/>
    <property type="match status" value="1"/>
</dbReference>
<dbReference type="InterPro" id="IPR036545">
    <property type="entry name" value="Cyt_c_oxidase_su5A/6_sf"/>
</dbReference>
<reference key="1">
    <citation type="journal article" date="1997" name="Eur. J. Biochem.">
        <title>The subunit structure of cytochrome-c oxidase from tuna heart and liver.</title>
        <authorList>
            <person name="Arnold S."/>
            <person name="Lee I."/>
            <person name="Kim M."/>
            <person name="Song E."/>
            <person name="Linder D."/>
            <person name="Lottspeich F."/>
            <person name="Kadenbach B."/>
        </authorList>
    </citation>
    <scope>PROTEIN SEQUENCE</scope>
    <source>
        <tissue>Heart</tissue>
        <tissue>Liver</tissue>
    </source>
</reference>
<comment type="function">
    <text evidence="2">Component of the cytochrome c oxidase, the last enzyme in the mitochondrial electron transport chain which drives oxidative phosphorylation. The respiratory chain contains 3 multisubunit complexes succinate dehydrogenase (complex II, CII), ubiquinol-cytochrome c oxidoreductase (cytochrome b-c1 complex, complex III, CIII) and cytochrome c oxidase (complex IV, CIV), that cooperate to transfer electrons derived from NADH and succinate to molecular oxygen, creating an electrochemical gradient over the inner membrane that drives transmembrane transport and the ATP synthase. Cytochrome c oxidase is the component of the respiratory chain that catalyzes the reduction of oxygen to water. Electrons originating from reduced cytochrome c in the intermembrane space (IMS) are transferred via the dinuclear copper A center (CU(A)) of subunit 2 and heme A of subunit 1 to the active site in subunit 1, a binuclear center (BNC) formed by heme A3 and copper B (CU(B)). The BNC reduces molecular oxygen to 2 water molecules using 4 electrons from cytochrome c in the IMS and 4 protons from the mitochondrial matrix.</text>
</comment>
<comment type="pathway">
    <text evidence="2">Energy metabolism; oxidative phosphorylation.</text>
</comment>
<comment type="subunit">
    <text evidence="1">Component of the cytochrome c oxidase (complex IV, CIV), a multisubunit enzyme composed of 14 subunits. The complex is composed of a catalytic core of 3 subunits MT-CO1, MT-CO2 and MT-CO3, encoded in the mitochondrial DNA, and 11 supernumerary subunits COX4I, COX5A, COX5B, COX6A, COX6B, COX6C, COX7A, COX7B, COX7C, COX8 and NDUFA4, which are encoded in the nuclear genome. The complex exists as a monomer or a dimer and forms supercomplexes (SCs) in the inner mitochondrial membrane with NADH-ubiquinone oxidoreductase (complex I, CI) and ubiquinol-cytochrome c oxidoreductase (cytochrome b-c1 complex, complex III, CIII), resulting in different assemblies (supercomplex SCI(1)III(2)IV(1) and megacomplex MCI(2)III(2)IV(2)).</text>
</comment>
<comment type="subcellular location">
    <subcellularLocation>
        <location evidence="1">Mitochondrion inner membrane</location>
        <topology evidence="1">Peripheral membrane protein</topology>
        <orientation evidence="1">Matrix side</orientation>
    </subcellularLocation>
</comment>
<comment type="similarity">
    <text evidence="3">Belongs to the cytochrome c oxidase subunit 5A family.</text>
</comment>
<accession>P80973</accession>
<feature type="chain" id="PRO_0000195217" description="Cytochrome c oxidase subunit 5A-2, mitochondrial">
    <location>
        <begin position="1"/>
        <end position="24" status="greater than"/>
    </location>
</feature>
<feature type="non-terminal residue">
    <location>
        <position position="24"/>
    </location>
</feature>
<proteinExistence type="evidence at protein level"/>
<keyword id="KW-0903">Direct protein sequencing</keyword>
<keyword id="KW-0349">Heme</keyword>
<keyword id="KW-0408">Iron</keyword>
<keyword id="KW-0472">Membrane</keyword>
<keyword id="KW-0479">Metal-binding</keyword>
<keyword id="KW-0496">Mitochondrion</keyword>
<keyword id="KW-0999">Mitochondrion inner membrane</keyword>
<sequence>SHGKQETDEEFDARWVTYFNKSDI</sequence>
<name>COXC_THUOB</name>
<protein>
    <recommendedName>
        <fullName>Cytochrome c oxidase subunit 5A-2, mitochondrial</fullName>
    </recommendedName>
    <alternativeName>
        <fullName>Cytochrome c oxidase polypeptide Va-2</fullName>
    </alternativeName>
</protein>